<dbReference type="EMBL" id="AAYY01000001">
    <property type="protein sequence ID" value="EDP45450.1"/>
    <property type="molecule type" value="Genomic_DNA"/>
</dbReference>
<dbReference type="RefSeq" id="XP_001732664.1">
    <property type="nucleotide sequence ID" value="XM_001732612.1"/>
</dbReference>
<dbReference type="SMR" id="A8PTK5"/>
<dbReference type="FunCoup" id="A8PTK5">
    <property type="interactions" value="178"/>
</dbReference>
<dbReference type="STRING" id="425265.A8PTK5"/>
<dbReference type="GeneID" id="5856970"/>
<dbReference type="KEGG" id="mgl:MGL_0439"/>
<dbReference type="VEuPathDB" id="FungiDB:MGL_0439"/>
<dbReference type="InParanoid" id="A8PTK5"/>
<dbReference type="OrthoDB" id="69461at2759"/>
<dbReference type="Proteomes" id="UP000008837">
    <property type="component" value="Unassembled WGS sequence"/>
</dbReference>
<dbReference type="GO" id="GO:0005789">
    <property type="term" value="C:endoplasmic reticulum membrane"/>
    <property type="evidence" value="ECO:0007669"/>
    <property type="project" value="UniProtKB-SubCell"/>
</dbReference>
<dbReference type="GO" id="GO:0043529">
    <property type="term" value="C:GET complex"/>
    <property type="evidence" value="ECO:0007669"/>
    <property type="project" value="TreeGrafter"/>
</dbReference>
<dbReference type="GO" id="GO:0043495">
    <property type="term" value="F:protein-membrane adaptor activity"/>
    <property type="evidence" value="ECO:0007669"/>
    <property type="project" value="TreeGrafter"/>
</dbReference>
<dbReference type="GO" id="GO:0071816">
    <property type="term" value="P:tail-anchored membrane protein insertion into ER membrane"/>
    <property type="evidence" value="ECO:0007669"/>
    <property type="project" value="InterPro"/>
</dbReference>
<dbReference type="Gene3D" id="1.10.287.660">
    <property type="entry name" value="Helix hairpin bin"/>
    <property type="match status" value="1"/>
</dbReference>
<dbReference type="InterPro" id="IPR028945">
    <property type="entry name" value="Get1"/>
</dbReference>
<dbReference type="InterPro" id="IPR029012">
    <property type="entry name" value="Helix_hairpin_bin_sf"/>
</dbReference>
<dbReference type="PANTHER" id="PTHR42650:SF1">
    <property type="entry name" value="GUIDED ENTRY OF TAIL-ANCHORED PROTEINS FACTOR 1"/>
    <property type="match status" value="1"/>
</dbReference>
<dbReference type="PANTHER" id="PTHR42650">
    <property type="entry name" value="TAIL-ANCHORED PROTEIN INSERTION RECEPTOR WRB"/>
    <property type="match status" value="1"/>
</dbReference>
<dbReference type="Pfam" id="PF04420">
    <property type="entry name" value="CHD5"/>
    <property type="match status" value="1"/>
</dbReference>
<keyword id="KW-0175">Coiled coil</keyword>
<keyword id="KW-0256">Endoplasmic reticulum</keyword>
<keyword id="KW-0472">Membrane</keyword>
<keyword id="KW-1185">Reference proteome</keyword>
<keyword id="KW-0812">Transmembrane</keyword>
<keyword id="KW-1133">Transmembrane helix</keyword>
<keyword id="KW-0813">Transport</keyword>
<comment type="function">
    <text evidence="1">Required for the post-translational delivery of tail-anchored (TA) proteins to the endoplasmic reticulum. Acts as a membrane receptor for soluble GET3, which recognizes and selectively binds the transmembrane domain of TA proteins in the cytosol (By similarity).</text>
</comment>
<comment type="subunit">
    <text evidence="1">Interacts with GET3.</text>
</comment>
<comment type="subcellular location">
    <subcellularLocation>
        <location evidence="1">Endoplasmic reticulum membrane</location>
        <topology evidence="1">Multi-pass membrane protein</topology>
    </subcellularLocation>
</comment>
<comment type="similarity">
    <text evidence="4">Belongs to the WRB/GET1 family.</text>
</comment>
<name>GET1_MALGO</name>
<evidence type="ECO:0000250" key="1"/>
<evidence type="ECO:0000255" key="2"/>
<evidence type="ECO:0000256" key="3">
    <source>
        <dbReference type="SAM" id="MobiDB-lite"/>
    </source>
</evidence>
<evidence type="ECO:0000305" key="4"/>
<gene>
    <name type="primary">GET1</name>
    <name type="ORF">MGL_0439</name>
</gene>
<organism>
    <name type="scientific">Malassezia globosa (strain ATCC MYA-4612 / CBS 7966)</name>
    <name type="common">Dandruff-associated fungus</name>
    <dbReference type="NCBI Taxonomy" id="425265"/>
    <lineage>
        <taxon>Eukaryota</taxon>
        <taxon>Fungi</taxon>
        <taxon>Dikarya</taxon>
        <taxon>Basidiomycota</taxon>
        <taxon>Ustilaginomycotina</taxon>
        <taxon>Malasseziomycetes</taxon>
        <taxon>Malasseziales</taxon>
        <taxon>Malasseziaceae</taxon>
        <taxon>Malassezia</taxon>
    </lineage>
</organism>
<feature type="chain" id="PRO_0000388600" description="Protein GET1">
    <location>
        <begin position="1"/>
        <end position="222"/>
    </location>
</feature>
<feature type="topological domain" description="Cytoplasmic" evidence="1">
    <location>
        <begin position="1"/>
        <end position="86"/>
    </location>
</feature>
<feature type="transmembrane region" description="Helical" evidence="2">
    <location>
        <begin position="87"/>
        <end position="107"/>
    </location>
</feature>
<feature type="topological domain" description="Lumenal" evidence="1">
    <location>
        <begin position="108"/>
        <end position="131"/>
    </location>
</feature>
<feature type="transmembrane region" description="Helical" evidence="2">
    <location>
        <begin position="132"/>
        <end position="148"/>
    </location>
</feature>
<feature type="topological domain" description="Cytoplasmic" evidence="1">
    <location>
        <begin position="149"/>
        <end position="222"/>
    </location>
</feature>
<feature type="region of interest" description="Disordered" evidence="3">
    <location>
        <begin position="168"/>
        <end position="222"/>
    </location>
</feature>
<feature type="coiled-coil region" evidence="2">
    <location>
        <begin position="48"/>
        <end position="75"/>
    </location>
</feature>
<feature type="compositionally biased region" description="Basic and acidic residues" evidence="3">
    <location>
        <begin position="194"/>
        <end position="206"/>
    </location>
</feature>
<feature type="compositionally biased region" description="Basic residues" evidence="3">
    <location>
        <begin position="213"/>
        <end position="222"/>
    </location>
</feature>
<reference key="1">
    <citation type="journal article" date="2007" name="Proc. Natl. Acad. Sci. U.S.A.">
        <title>Dandruff-associated Malassezia genomes reveal convergent and divergent virulence traits shared with plant and human fungal pathogens.</title>
        <authorList>
            <person name="Xu J."/>
            <person name="Saunders C.W."/>
            <person name="Hu P."/>
            <person name="Grant R.A."/>
            <person name="Boekhout T."/>
            <person name="Kuramae E.E."/>
            <person name="Kronstad J.W."/>
            <person name="DeAngelis Y.M."/>
            <person name="Reeder N.L."/>
            <person name="Johnstone K.R."/>
            <person name="Leland M."/>
            <person name="Fieno A.M."/>
            <person name="Begley W.M."/>
            <person name="Sun Y."/>
            <person name="Lacey M.P."/>
            <person name="Chaudhary T."/>
            <person name="Keough T."/>
            <person name="Chu L."/>
            <person name="Sears R."/>
            <person name="Yuan B."/>
            <person name="Dawson T.L. Jr."/>
        </authorList>
    </citation>
    <scope>NUCLEOTIDE SEQUENCE [LARGE SCALE GENOMIC DNA]</scope>
    <source>
        <strain>ATCC MYA-4612 / CBS 7966</strain>
    </source>
</reference>
<protein>
    <recommendedName>
        <fullName>Protein GET1</fullName>
    </recommendedName>
    <alternativeName>
        <fullName>Guided entry of tail-anchored proteins 1</fullName>
    </alternativeName>
</protein>
<sequence length="222" mass="25366">MYITNDEFRVFYVRIVRFSASSKLSSMKKELFETRQLMNMTSAQDEFSKWAKLRRRVDKLSSQVDEQNKSLASSQFVYSIMFKSFMFVLNSAIPFVLNWYYKRVPMFYLPPGDWFGPMGYLFSFPNAPAGAVSSTVWTTVCGRVLALVGEYARELFVKDAYLVAEPPMTTEKSSGDKETTSKLSTNKPAAMTGEKFDFGKEVKEADQPQGILKQRRANKSSD</sequence>
<proteinExistence type="inferred from homology"/>
<accession>A8PTK5</accession>